<sequence length="352" mass="36234">MTSQASAQAAGNTWPRLISALINGADLTADNTEWAMDTIMSGEATPSQIAGFLVALRSKGETVDEIAGLVEAMLAHANPVDIAGEKLDIVGTGGDQLNTVNISTMAALVCAGAGAKVVKHGNRASSSSSGSADVLEALGVRLDLPIERVARNAEEAGITFCFAQVFHPSFRHTAVPRRELAIPTAFNFLGPLTNPARVQASAVGVANERMAPLVAGVLAKRGSRGLVFRGSDGLDELTTTGPSTVWEIRNGEVTEQTFDPQALGIRAATVEELRGGDATANAAVVRDVLSGVAGPARDAVLLNAAAGLVAFDVDAEGTLTDRMAAALKRAEESIDSGAAAAVLEKWVALTRG</sequence>
<reference key="1">
    <citation type="journal article" date="2013" name="Stand. Genomic Sci.">
        <title>Complete genome sequence of Arthrobacter sp. strain FB24.</title>
        <authorList>
            <person name="Nakatsu C.H."/>
            <person name="Barabote R."/>
            <person name="Thompson S."/>
            <person name="Bruce D."/>
            <person name="Detter C."/>
            <person name="Brettin T."/>
            <person name="Han C."/>
            <person name="Beasley F."/>
            <person name="Chen W."/>
            <person name="Konopka A."/>
            <person name="Xie G."/>
        </authorList>
    </citation>
    <scope>NUCLEOTIDE SEQUENCE [LARGE SCALE GENOMIC DNA]</scope>
    <source>
        <strain>FB24</strain>
    </source>
</reference>
<dbReference type="EC" id="2.4.2.18" evidence="1"/>
<dbReference type="EMBL" id="CP000454">
    <property type="protein sequence ID" value="ABK03588.1"/>
    <property type="molecule type" value="Genomic_DNA"/>
</dbReference>
<dbReference type="RefSeq" id="WP_011692052.1">
    <property type="nucleotide sequence ID" value="NC_008541.1"/>
</dbReference>
<dbReference type="SMR" id="A0JX18"/>
<dbReference type="STRING" id="290399.Arth_2208"/>
<dbReference type="KEGG" id="art:Arth_2208"/>
<dbReference type="eggNOG" id="COG0547">
    <property type="taxonomic scope" value="Bacteria"/>
</dbReference>
<dbReference type="HOGENOM" id="CLU_034315_4_1_11"/>
<dbReference type="OrthoDB" id="9806430at2"/>
<dbReference type="UniPathway" id="UPA00035">
    <property type="reaction ID" value="UER00041"/>
</dbReference>
<dbReference type="Proteomes" id="UP000000754">
    <property type="component" value="Chromosome"/>
</dbReference>
<dbReference type="GO" id="GO:0005829">
    <property type="term" value="C:cytosol"/>
    <property type="evidence" value="ECO:0007669"/>
    <property type="project" value="TreeGrafter"/>
</dbReference>
<dbReference type="GO" id="GO:0004048">
    <property type="term" value="F:anthranilate phosphoribosyltransferase activity"/>
    <property type="evidence" value="ECO:0007669"/>
    <property type="project" value="UniProtKB-UniRule"/>
</dbReference>
<dbReference type="GO" id="GO:0000287">
    <property type="term" value="F:magnesium ion binding"/>
    <property type="evidence" value="ECO:0007669"/>
    <property type="project" value="UniProtKB-UniRule"/>
</dbReference>
<dbReference type="GO" id="GO:0000162">
    <property type="term" value="P:L-tryptophan biosynthetic process"/>
    <property type="evidence" value="ECO:0007669"/>
    <property type="project" value="UniProtKB-UniRule"/>
</dbReference>
<dbReference type="FunFam" id="3.40.1030.10:FF:000002">
    <property type="entry name" value="Anthranilate phosphoribosyltransferase"/>
    <property type="match status" value="1"/>
</dbReference>
<dbReference type="Gene3D" id="3.40.1030.10">
    <property type="entry name" value="Nucleoside phosphorylase/phosphoribosyltransferase catalytic domain"/>
    <property type="match status" value="1"/>
</dbReference>
<dbReference type="Gene3D" id="1.20.970.10">
    <property type="entry name" value="Transferase, Pyrimidine Nucleoside Phosphorylase, Chain C"/>
    <property type="match status" value="1"/>
</dbReference>
<dbReference type="HAMAP" id="MF_00211">
    <property type="entry name" value="TrpD"/>
    <property type="match status" value="1"/>
</dbReference>
<dbReference type="InterPro" id="IPR005940">
    <property type="entry name" value="Anthranilate_Pribosyl_Tfrase"/>
</dbReference>
<dbReference type="InterPro" id="IPR000312">
    <property type="entry name" value="Glycosyl_Trfase_fam3"/>
</dbReference>
<dbReference type="InterPro" id="IPR017459">
    <property type="entry name" value="Glycosyl_Trfase_fam3_N_dom"/>
</dbReference>
<dbReference type="InterPro" id="IPR036320">
    <property type="entry name" value="Glycosyl_Trfase_fam3_N_dom_sf"/>
</dbReference>
<dbReference type="InterPro" id="IPR035902">
    <property type="entry name" value="Nuc_phospho_transferase"/>
</dbReference>
<dbReference type="NCBIfam" id="TIGR01245">
    <property type="entry name" value="trpD"/>
    <property type="match status" value="1"/>
</dbReference>
<dbReference type="PANTHER" id="PTHR43285">
    <property type="entry name" value="ANTHRANILATE PHOSPHORIBOSYLTRANSFERASE"/>
    <property type="match status" value="1"/>
</dbReference>
<dbReference type="PANTHER" id="PTHR43285:SF2">
    <property type="entry name" value="ANTHRANILATE PHOSPHORIBOSYLTRANSFERASE"/>
    <property type="match status" value="1"/>
</dbReference>
<dbReference type="Pfam" id="PF02885">
    <property type="entry name" value="Glycos_trans_3N"/>
    <property type="match status" value="1"/>
</dbReference>
<dbReference type="Pfam" id="PF00591">
    <property type="entry name" value="Glycos_transf_3"/>
    <property type="match status" value="1"/>
</dbReference>
<dbReference type="SUPFAM" id="SSF52418">
    <property type="entry name" value="Nucleoside phosphorylase/phosphoribosyltransferase catalytic domain"/>
    <property type="match status" value="1"/>
</dbReference>
<dbReference type="SUPFAM" id="SSF47648">
    <property type="entry name" value="Nucleoside phosphorylase/phosphoribosyltransferase N-terminal domain"/>
    <property type="match status" value="1"/>
</dbReference>
<keyword id="KW-0028">Amino-acid biosynthesis</keyword>
<keyword id="KW-0057">Aromatic amino acid biosynthesis</keyword>
<keyword id="KW-0328">Glycosyltransferase</keyword>
<keyword id="KW-0460">Magnesium</keyword>
<keyword id="KW-0479">Metal-binding</keyword>
<keyword id="KW-1185">Reference proteome</keyword>
<keyword id="KW-0808">Transferase</keyword>
<keyword id="KW-0822">Tryptophan biosynthesis</keyword>
<feature type="chain" id="PRO_0000325413" description="Anthranilate phosphoribosyltransferase">
    <location>
        <begin position="1"/>
        <end position="352"/>
    </location>
</feature>
<feature type="binding site" evidence="1">
    <location>
        <position position="91"/>
    </location>
    <ligand>
        <name>5-phospho-alpha-D-ribose 1-diphosphate</name>
        <dbReference type="ChEBI" id="CHEBI:58017"/>
    </ligand>
</feature>
<feature type="binding site" evidence="1">
    <location>
        <position position="91"/>
    </location>
    <ligand>
        <name>anthranilate</name>
        <dbReference type="ChEBI" id="CHEBI:16567"/>
        <label>1</label>
    </ligand>
</feature>
<feature type="binding site" evidence="1">
    <location>
        <begin position="94"/>
        <end position="95"/>
    </location>
    <ligand>
        <name>5-phospho-alpha-D-ribose 1-diphosphate</name>
        <dbReference type="ChEBI" id="CHEBI:58017"/>
    </ligand>
</feature>
<feature type="binding site" evidence="1">
    <location>
        <position position="99"/>
    </location>
    <ligand>
        <name>5-phospho-alpha-D-ribose 1-diphosphate</name>
        <dbReference type="ChEBI" id="CHEBI:58017"/>
    </ligand>
</feature>
<feature type="binding site" evidence="1">
    <location>
        <begin position="101"/>
        <end position="104"/>
    </location>
    <ligand>
        <name>5-phospho-alpha-D-ribose 1-diphosphate</name>
        <dbReference type="ChEBI" id="CHEBI:58017"/>
    </ligand>
</feature>
<feature type="binding site" evidence="1">
    <location>
        <position position="103"/>
    </location>
    <ligand>
        <name>Mg(2+)</name>
        <dbReference type="ChEBI" id="CHEBI:18420"/>
        <label>1</label>
    </ligand>
</feature>
<feature type="binding site" evidence="1">
    <location>
        <begin position="119"/>
        <end position="127"/>
    </location>
    <ligand>
        <name>5-phospho-alpha-D-ribose 1-diphosphate</name>
        <dbReference type="ChEBI" id="CHEBI:58017"/>
    </ligand>
</feature>
<feature type="binding site" evidence="1">
    <location>
        <position position="122"/>
    </location>
    <ligand>
        <name>anthranilate</name>
        <dbReference type="ChEBI" id="CHEBI:16567"/>
        <label>1</label>
    </ligand>
</feature>
<feature type="binding site" evidence="1">
    <location>
        <position position="131"/>
    </location>
    <ligand>
        <name>5-phospho-alpha-D-ribose 1-diphosphate</name>
        <dbReference type="ChEBI" id="CHEBI:58017"/>
    </ligand>
</feature>
<feature type="binding site" evidence="1">
    <location>
        <position position="177"/>
    </location>
    <ligand>
        <name>anthranilate</name>
        <dbReference type="ChEBI" id="CHEBI:16567"/>
        <label>2</label>
    </ligand>
</feature>
<feature type="binding site" evidence="1">
    <location>
        <position position="235"/>
    </location>
    <ligand>
        <name>Mg(2+)</name>
        <dbReference type="ChEBI" id="CHEBI:18420"/>
        <label>2</label>
    </ligand>
</feature>
<feature type="binding site" evidence="1">
    <location>
        <position position="236"/>
    </location>
    <ligand>
        <name>Mg(2+)</name>
        <dbReference type="ChEBI" id="CHEBI:18420"/>
        <label>1</label>
    </ligand>
</feature>
<feature type="binding site" evidence="1">
    <location>
        <position position="236"/>
    </location>
    <ligand>
        <name>Mg(2+)</name>
        <dbReference type="ChEBI" id="CHEBI:18420"/>
        <label>2</label>
    </ligand>
</feature>
<proteinExistence type="inferred from homology"/>
<gene>
    <name evidence="1" type="primary">trpD</name>
    <name type="ordered locus">Arth_2208</name>
</gene>
<organism>
    <name type="scientific">Arthrobacter sp. (strain FB24)</name>
    <dbReference type="NCBI Taxonomy" id="290399"/>
    <lineage>
        <taxon>Bacteria</taxon>
        <taxon>Bacillati</taxon>
        <taxon>Actinomycetota</taxon>
        <taxon>Actinomycetes</taxon>
        <taxon>Micrococcales</taxon>
        <taxon>Micrococcaceae</taxon>
        <taxon>Arthrobacter</taxon>
    </lineage>
</organism>
<protein>
    <recommendedName>
        <fullName evidence="1">Anthranilate phosphoribosyltransferase</fullName>
        <ecNumber evidence="1">2.4.2.18</ecNumber>
    </recommendedName>
</protein>
<comment type="function">
    <text evidence="1">Catalyzes the transfer of the phosphoribosyl group of 5-phosphorylribose-1-pyrophosphate (PRPP) to anthranilate to yield N-(5'-phosphoribosyl)-anthranilate (PRA).</text>
</comment>
<comment type="catalytic activity">
    <reaction evidence="1">
        <text>N-(5-phospho-beta-D-ribosyl)anthranilate + diphosphate = 5-phospho-alpha-D-ribose 1-diphosphate + anthranilate</text>
        <dbReference type="Rhea" id="RHEA:11768"/>
        <dbReference type="ChEBI" id="CHEBI:16567"/>
        <dbReference type="ChEBI" id="CHEBI:18277"/>
        <dbReference type="ChEBI" id="CHEBI:33019"/>
        <dbReference type="ChEBI" id="CHEBI:58017"/>
        <dbReference type="EC" id="2.4.2.18"/>
    </reaction>
</comment>
<comment type="cofactor">
    <cofactor evidence="1">
        <name>Mg(2+)</name>
        <dbReference type="ChEBI" id="CHEBI:18420"/>
    </cofactor>
    <text evidence="1">Binds 2 magnesium ions per monomer.</text>
</comment>
<comment type="pathway">
    <text evidence="1">Amino-acid biosynthesis; L-tryptophan biosynthesis; L-tryptophan from chorismate: step 2/5.</text>
</comment>
<comment type="subunit">
    <text evidence="1">Homodimer.</text>
</comment>
<comment type="similarity">
    <text evidence="1">Belongs to the anthranilate phosphoribosyltransferase family.</text>
</comment>
<evidence type="ECO:0000255" key="1">
    <source>
        <dbReference type="HAMAP-Rule" id="MF_00211"/>
    </source>
</evidence>
<accession>A0JX18</accession>
<name>TRPD_ARTS2</name>